<feature type="initiator methionine" description="Removed" evidence="6">
    <location>
        <position position="1"/>
    </location>
</feature>
<feature type="chain" id="PRO_0000111033" description="Oligoribonuclease">
    <location>
        <begin position="2"/>
        <end position="181"/>
    </location>
</feature>
<feature type="domain" description="Exonuclease">
    <location>
        <begin position="8"/>
        <end position="171"/>
    </location>
</feature>
<feature type="active site" evidence="1">
    <location>
        <position position="129"/>
    </location>
</feature>
<feature type="binding site">
    <location>
        <position position="12"/>
    </location>
    <ligand>
        <name>Zn(2+)</name>
        <dbReference type="ChEBI" id="CHEBI:29105"/>
    </ligand>
</feature>
<feature type="binding site">
    <location>
        <position position="14"/>
    </location>
    <ligand>
        <name>Zn(2+)</name>
        <dbReference type="ChEBI" id="CHEBI:29105"/>
    </ligand>
</feature>
<feature type="binding site">
    <location>
        <position position="163"/>
    </location>
    <ligand>
        <name>Zn(2+)</name>
        <dbReference type="ChEBI" id="CHEBI:29105"/>
    </ligand>
</feature>
<feature type="helix" evidence="8">
    <location>
        <begin position="4"/>
        <end position="6"/>
    </location>
</feature>
<feature type="strand" evidence="8">
    <location>
        <begin position="8"/>
        <end position="18"/>
    </location>
</feature>
<feature type="turn" evidence="8">
    <location>
        <begin position="20"/>
        <end position="22"/>
    </location>
</feature>
<feature type="strand" evidence="8">
    <location>
        <begin position="25"/>
        <end position="33"/>
    </location>
</feature>
<feature type="strand" evidence="8">
    <location>
        <begin position="39"/>
        <end position="47"/>
    </location>
</feature>
<feature type="helix" evidence="8">
    <location>
        <begin position="52"/>
        <end position="55"/>
    </location>
</feature>
<feature type="helix" evidence="8">
    <location>
        <begin position="60"/>
        <end position="68"/>
    </location>
</feature>
<feature type="helix" evidence="8">
    <location>
        <begin position="71"/>
        <end position="77"/>
    </location>
</feature>
<feature type="helix" evidence="8">
    <location>
        <begin position="82"/>
        <end position="93"/>
    </location>
</feature>
<feature type="turn" evidence="8">
    <location>
        <begin position="94"/>
        <end position="96"/>
    </location>
</feature>
<feature type="strand" evidence="8">
    <location>
        <begin position="104"/>
        <end position="108"/>
    </location>
</feature>
<feature type="helix" evidence="8">
    <location>
        <begin position="109"/>
        <end position="119"/>
    </location>
</feature>
<feature type="helix" evidence="8">
    <location>
        <begin position="121"/>
        <end position="126"/>
    </location>
</feature>
<feature type="strand" evidence="8">
    <location>
        <begin position="131"/>
        <end position="133"/>
    </location>
</feature>
<feature type="helix" evidence="8">
    <location>
        <begin position="135"/>
        <end position="144"/>
    </location>
</feature>
<feature type="helix" evidence="8">
    <location>
        <begin position="146"/>
        <end position="151"/>
    </location>
</feature>
<feature type="helix" evidence="8">
    <location>
        <begin position="160"/>
        <end position="177"/>
    </location>
</feature>
<accession>P0A784</accession>
<accession>P39287</accession>
<accession>P76799</accession>
<accession>Q2M6E0</accession>
<organism>
    <name type="scientific">Escherichia coli (strain K12)</name>
    <dbReference type="NCBI Taxonomy" id="83333"/>
    <lineage>
        <taxon>Bacteria</taxon>
        <taxon>Pseudomonadati</taxon>
        <taxon>Pseudomonadota</taxon>
        <taxon>Gammaproteobacteria</taxon>
        <taxon>Enterobacterales</taxon>
        <taxon>Enterobacteriaceae</taxon>
        <taxon>Escherichia</taxon>
    </lineage>
</organism>
<protein>
    <recommendedName>
        <fullName>Oligoribonuclease</fullName>
        <ecNumber>3.1.15.-</ecNumber>
    </recommendedName>
</protein>
<evidence type="ECO:0000255" key="1"/>
<evidence type="ECO:0000269" key="2">
    <source>
    </source>
</evidence>
<evidence type="ECO:0000269" key="3">
    <source>
    </source>
</evidence>
<evidence type="ECO:0000269" key="4">
    <source>
    </source>
</evidence>
<evidence type="ECO:0000269" key="5">
    <source>
    </source>
</evidence>
<evidence type="ECO:0000269" key="6">
    <source>
    </source>
</evidence>
<evidence type="ECO:0000305" key="7"/>
<evidence type="ECO:0007829" key="8">
    <source>
        <dbReference type="PDB" id="2IGI"/>
    </source>
</evidence>
<proteinExistence type="evidence at protein level"/>
<comment type="function">
    <text evidence="4 5 6">3'-to-5' exoribonuclease specific for small oligoribonucleotides 2 to 5 nucleotides in length, as well as small (2 to 5 nucleotides) ssDNA oligomers. Probably responsible for the final step in mRNA degradation.</text>
</comment>
<comment type="activity regulation">
    <text evidence="4">Inhibited by adenosine 3',5'-bisphosphate (PAP).</text>
</comment>
<comment type="subunit">
    <text evidence="3">Homodimer.</text>
</comment>
<comment type="subcellular location">
    <subcellularLocation>
        <location evidence="7">Cytoplasm</location>
    </subcellularLocation>
</comment>
<comment type="disruption phenotype">
    <text evidence="2">Essential. In depletion experiments the level of oligonucleotides is elevated and that of mononucleotides is severely reduced compared to wild-type.</text>
</comment>
<comment type="similarity">
    <text evidence="7">Belongs to the oligoribonuclease family.</text>
</comment>
<comment type="sequence caution" evidence="7">
    <conflict type="erroneous initiation">
        <sequence resource="EMBL-CDS" id="AAA97061"/>
    </conflict>
    <text>Extended N-terminus.</text>
</comment>
<keyword id="KW-0002">3D-structure</keyword>
<keyword id="KW-0963">Cytoplasm</keyword>
<keyword id="KW-0903">Direct protein sequencing</keyword>
<keyword id="KW-0269">Exonuclease</keyword>
<keyword id="KW-0378">Hydrolase</keyword>
<keyword id="KW-0479">Metal-binding</keyword>
<keyword id="KW-0540">Nuclease</keyword>
<keyword id="KW-1185">Reference proteome</keyword>
<keyword id="KW-0862">Zinc</keyword>
<name>ORN_ECOLI</name>
<dbReference type="EC" id="3.1.15.-"/>
<dbReference type="EMBL" id="U14003">
    <property type="protein sequence ID" value="AAA97061.1"/>
    <property type="status" value="ALT_INIT"/>
    <property type="molecule type" value="Genomic_DNA"/>
</dbReference>
<dbReference type="EMBL" id="U00096">
    <property type="protein sequence ID" value="AAC77122.2"/>
    <property type="molecule type" value="Genomic_DNA"/>
</dbReference>
<dbReference type="EMBL" id="AP009048">
    <property type="protein sequence ID" value="BAE78166.1"/>
    <property type="molecule type" value="Genomic_DNA"/>
</dbReference>
<dbReference type="PIR" id="S56390">
    <property type="entry name" value="S56390"/>
</dbReference>
<dbReference type="RefSeq" id="NP_418586.4">
    <property type="nucleotide sequence ID" value="NC_000913.3"/>
</dbReference>
<dbReference type="RefSeq" id="WP_001295188.1">
    <property type="nucleotide sequence ID" value="NZ_STEB01000014.1"/>
</dbReference>
<dbReference type="PDB" id="1YTA">
    <property type="method" value="X-ray"/>
    <property type="resolution" value="2.20 A"/>
    <property type="chains" value="A/B/C/D=2-181"/>
</dbReference>
<dbReference type="PDB" id="2IGI">
    <property type="method" value="X-ray"/>
    <property type="resolution" value="1.70 A"/>
    <property type="chains" value="A/B=2-181"/>
</dbReference>
<dbReference type="PDB" id="7VH4">
    <property type="method" value="X-ray"/>
    <property type="resolution" value="2.30 A"/>
    <property type="chains" value="A/B/C/D=1-181"/>
</dbReference>
<dbReference type="PDBsum" id="1YTA"/>
<dbReference type="PDBsum" id="2IGI"/>
<dbReference type="PDBsum" id="7VH4"/>
<dbReference type="SMR" id="P0A784"/>
<dbReference type="BioGRID" id="4261079">
    <property type="interactions" value="16"/>
</dbReference>
<dbReference type="DIP" id="DIP-10412N"/>
<dbReference type="FunCoup" id="P0A784">
    <property type="interactions" value="585"/>
</dbReference>
<dbReference type="STRING" id="511145.b4162"/>
<dbReference type="jPOST" id="P0A784"/>
<dbReference type="PaxDb" id="511145-b4162"/>
<dbReference type="EnsemblBacteria" id="AAC77122">
    <property type="protein sequence ID" value="AAC77122"/>
    <property type="gene ID" value="b4162"/>
</dbReference>
<dbReference type="GeneID" id="93777660"/>
<dbReference type="GeneID" id="948675"/>
<dbReference type="KEGG" id="ecj:JW5740"/>
<dbReference type="KEGG" id="eco:b4162"/>
<dbReference type="KEGG" id="ecoc:C3026_22495"/>
<dbReference type="PATRIC" id="fig|1411691.4.peg.2536"/>
<dbReference type="EchoBASE" id="EB2373"/>
<dbReference type="eggNOG" id="COG1949">
    <property type="taxonomic scope" value="Bacteria"/>
</dbReference>
<dbReference type="HOGENOM" id="CLU_064761_2_0_6"/>
<dbReference type="InParanoid" id="P0A784"/>
<dbReference type="OMA" id="AFFHYRN"/>
<dbReference type="OrthoDB" id="9801329at2"/>
<dbReference type="PhylomeDB" id="P0A784"/>
<dbReference type="BioCyc" id="EcoCyc:G7842-MONOMER"/>
<dbReference type="BioCyc" id="MetaCyc:G7842-MONOMER"/>
<dbReference type="BRENDA" id="3.1.13.3">
    <property type="organism ID" value="2026"/>
</dbReference>
<dbReference type="EvolutionaryTrace" id="P0A784"/>
<dbReference type="PRO" id="PR:P0A784"/>
<dbReference type="Proteomes" id="UP000000625">
    <property type="component" value="Chromosome"/>
</dbReference>
<dbReference type="GO" id="GO:0005829">
    <property type="term" value="C:cytosol"/>
    <property type="evidence" value="ECO:0000314"/>
    <property type="project" value="EcoCyc"/>
</dbReference>
<dbReference type="GO" id="GO:0000175">
    <property type="term" value="F:3'-5'-RNA exonuclease activity"/>
    <property type="evidence" value="ECO:0000314"/>
    <property type="project" value="EcoCyc"/>
</dbReference>
<dbReference type="GO" id="GO:0046872">
    <property type="term" value="F:metal ion binding"/>
    <property type="evidence" value="ECO:0007669"/>
    <property type="project" value="UniProtKB-KW"/>
</dbReference>
<dbReference type="GO" id="GO:0003676">
    <property type="term" value="F:nucleic acid binding"/>
    <property type="evidence" value="ECO:0007669"/>
    <property type="project" value="InterPro"/>
</dbReference>
<dbReference type="GO" id="GO:0034611">
    <property type="term" value="F:oligoribonucleotidase activity"/>
    <property type="evidence" value="ECO:0000314"/>
    <property type="project" value="EcoCyc"/>
</dbReference>
<dbReference type="GO" id="GO:0008310">
    <property type="term" value="F:single-stranded DNA 3'-5' DNA exonuclease activity"/>
    <property type="evidence" value="ECO:0000314"/>
    <property type="project" value="EcoCyc"/>
</dbReference>
<dbReference type="GO" id="GO:0006401">
    <property type="term" value="P:RNA catabolic process"/>
    <property type="evidence" value="ECO:0000315"/>
    <property type="project" value="EcoCyc"/>
</dbReference>
<dbReference type="CDD" id="cd06135">
    <property type="entry name" value="Orn"/>
    <property type="match status" value="1"/>
</dbReference>
<dbReference type="FunFam" id="3.30.420.10:FF:000003">
    <property type="entry name" value="Oligoribonuclease"/>
    <property type="match status" value="1"/>
</dbReference>
<dbReference type="Gene3D" id="3.30.420.10">
    <property type="entry name" value="Ribonuclease H-like superfamily/Ribonuclease H"/>
    <property type="match status" value="1"/>
</dbReference>
<dbReference type="HAMAP" id="MF_00045">
    <property type="entry name" value="Oligoribonuclease"/>
    <property type="match status" value="1"/>
</dbReference>
<dbReference type="InterPro" id="IPR013520">
    <property type="entry name" value="Exonuclease_RNaseT/DNA_pol3"/>
</dbReference>
<dbReference type="InterPro" id="IPR022894">
    <property type="entry name" value="Oligoribonuclease"/>
</dbReference>
<dbReference type="InterPro" id="IPR012337">
    <property type="entry name" value="RNaseH-like_sf"/>
</dbReference>
<dbReference type="InterPro" id="IPR036397">
    <property type="entry name" value="RNaseH_sf"/>
</dbReference>
<dbReference type="NCBIfam" id="NF003765">
    <property type="entry name" value="PRK05359.1"/>
    <property type="match status" value="1"/>
</dbReference>
<dbReference type="PANTHER" id="PTHR11046">
    <property type="entry name" value="OLIGORIBONUCLEASE, MITOCHONDRIAL"/>
    <property type="match status" value="1"/>
</dbReference>
<dbReference type="PANTHER" id="PTHR11046:SF0">
    <property type="entry name" value="OLIGORIBONUCLEASE, MITOCHONDRIAL"/>
    <property type="match status" value="1"/>
</dbReference>
<dbReference type="Pfam" id="PF00929">
    <property type="entry name" value="RNase_T"/>
    <property type="match status" value="1"/>
</dbReference>
<dbReference type="SMART" id="SM00479">
    <property type="entry name" value="EXOIII"/>
    <property type="match status" value="1"/>
</dbReference>
<dbReference type="SUPFAM" id="SSF53098">
    <property type="entry name" value="Ribonuclease H-like"/>
    <property type="match status" value="1"/>
</dbReference>
<sequence length="181" mass="20816">MSANENNLIWIDLEMTGLDPERDRIIEIATLVTDANLNILAEGPTIAVHQSDEQLALMDDWNVRTHTASGLVERVKASTMGDREAELATLEFLKQWVPAGKSPICGNSIGQDRRFLFKYMPELEAYFHYRYLDVSTLKELARRWKPEILDGFTKQGTHQAMDDIRESVAELAYYREHFIKL</sequence>
<gene>
    <name type="primary">orn</name>
    <name type="synonym">o204a</name>
    <name type="synonym">yjeR</name>
    <name type="ordered locus">b4162</name>
    <name type="ordered locus">JW5740</name>
</gene>
<reference key="1">
    <citation type="journal article" date="1995" name="Nucleic Acids Res.">
        <title>Analysis of the Escherichia coli genome VI: DNA sequence of the region from 92.8 through 100 minutes.</title>
        <authorList>
            <person name="Burland V.D."/>
            <person name="Plunkett G. III"/>
            <person name="Sofia H.J."/>
            <person name="Daniels D.L."/>
            <person name="Blattner F.R."/>
        </authorList>
    </citation>
    <scope>NUCLEOTIDE SEQUENCE [LARGE SCALE GENOMIC DNA]</scope>
    <source>
        <strain>K12 / MG1655 / ATCC 47076</strain>
    </source>
</reference>
<reference key="2">
    <citation type="journal article" date="1997" name="Science">
        <title>The complete genome sequence of Escherichia coli K-12.</title>
        <authorList>
            <person name="Blattner F.R."/>
            <person name="Plunkett G. III"/>
            <person name="Bloch C.A."/>
            <person name="Perna N.T."/>
            <person name="Burland V."/>
            <person name="Riley M."/>
            <person name="Collado-Vides J."/>
            <person name="Glasner J.D."/>
            <person name="Rode C.K."/>
            <person name="Mayhew G.F."/>
            <person name="Gregor J."/>
            <person name="Davis N.W."/>
            <person name="Kirkpatrick H.A."/>
            <person name="Goeden M.A."/>
            <person name="Rose D.J."/>
            <person name="Mau B."/>
            <person name="Shao Y."/>
        </authorList>
    </citation>
    <scope>NUCLEOTIDE SEQUENCE [LARGE SCALE GENOMIC DNA]</scope>
    <source>
        <strain>K12 / MG1655 / ATCC 47076</strain>
    </source>
</reference>
<reference key="3">
    <citation type="journal article" date="2006" name="Mol. Syst. Biol.">
        <title>Highly accurate genome sequences of Escherichia coli K-12 strains MG1655 and W3110.</title>
        <authorList>
            <person name="Hayashi K."/>
            <person name="Morooka N."/>
            <person name="Yamamoto Y."/>
            <person name="Fujita K."/>
            <person name="Isono K."/>
            <person name="Choi S."/>
            <person name="Ohtsubo E."/>
            <person name="Baba T."/>
            <person name="Wanner B.L."/>
            <person name="Mori H."/>
            <person name="Horiuchi T."/>
        </authorList>
    </citation>
    <scope>NUCLEOTIDE SEQUENCE [LARGE SCALE GENOMIC DNA]</scope>
    <source>
        <strain>K12 / W3110 / ATCC 27325 / DSM 5911</strain>
    </source>
</reference>
<reference key="4">
    <citation type="journal article" date="1998" name="J. Bacteriol.">
        <title>Oligoribonuclease is encoded by a highly conserved gene in the 3'-5' exonuclease superfamily.</title>
        <authorList>
            <person name="Zhang X."/>
            <person name="Zhu L."/>
            <person name="Deutscher M.P."/>
        </authorList>
    </citation>
    <scope>PROTEIN SEQUENCE OF 2-14</scope>
    <scope>POSSIBLE SUBUNIT</scope>
    <scope>FUNCTION</scope>
</reference>
<reference key="5">
    <citation type="journal article" date="1995" name="J. Bacteriol.">
        <title>Oligoribonuclease is distinct from the other known exoribonucleases of Escherichia coli.</title>
        <authorList>
            <person name="Yu D."/>
            <person name="Deutscher M.P."/>
        </authorList>
    </citation>
    <scope>FUNCTION</scope>
    <source>
        <strain>K12</strain>
    </source>
</reference>
<reference key="6">
    <citation type="journal article" date="1999" name="Proc. Natl. Acad. Sci. U.S.A.">
        <title>Oligoribonuclease is an essential component of the mRNA decay pathway.</title>
        <authorList>
            <person name="Ghosh S."/>
            <person name="Deutscher M.P."/>
        </authorList>
    </citation>
    <scope>DISRUPTION PHENOTYPE</scope>
    <source>
        <strain>K12</strain>
    </source>
</reference>
<reference key="7">
    <citation type="journal article" date="2006" name="Nucleic Acids Res.">
        <title>Oligoribonuclease is a common downstream target of lithium-induced pAp accumulation in Escherichia coli and human cells.</title>
        <authorList>
            <person name="Mechold U."/>
            <person name="Ogryzko V."/>
            <person name="Ngo S."/>
            <person name="Danchin A."/>
        </authorList>
    </citation>
    <scope>FUNCTION</scope>
    <scope>ACTIVITY REGULATION</scope>
</reference>
<reference key="8">
    <citation type="journal article" date="2004" name="Acta Crystallogr. D">
        <title>Purification and crystallization of Escherichia coli oligoribonuclease.</title>
        <authorList>
            <person name="Fiedler T.J."/>
            <person name="Vincent H.A."/>
            <person name="Zuo Y."/>
            <person name="Gavrialov O."/>
            <person name="Malhotra A."/>
        </authorList>
    </citation>
    <scope>X-RAY CRYSTALLOGRAPHY (1.7 ANGSTROMS) OF 2-181</scope>
    <scope>SUBUNIT</scope>
    <source>
        <strain>K12 / W3110 / ATCC 27325 / DSM 5911</strain>
    </source>
</reference>